<proteinExistence type="predicted"/>
<keyword id="KW-0472">Membrane</keyword>
<keyword id="KW-1185">Reference proteome</keyword>
<keyword id="KW-0812">Transmembrane</keyword>
<keyword id="KW-1133">Transmembrane helix</keyword>
<feature type="chain" id="PRO_0000101297" description="Uncharacterized protein RP014">
    <location>
        <begin position="1"/>
        <end position="299"/>
    </location>
</feature>
<feature type="transmembrane region" description="Helical" evidence="1">
    <location>
        <begin position="25"/>
        <end position="45"/>
    </location>
</feature>
<gene>
    <name type="ordered locus">RP014</name>
</gene>
<sequence length="299" mass="34923">MKTNMLTNNCKDKIFIKKSHTILRLLYFFKSLAMILFFIFFSLTSYAKPKIVVSITPISSILAMLVKDKVDIESLAVNNECPHHHNIKPSDITKVRNADMVIYINEQFDGFTEKLISNNNQNIIKISDIKSLTTIKNNWHIWLDLNNAKILLQEFAQIFIKNFPQLQKEINNNLPIALKELNKLQDIKNNEFRTIKDIILLSDSSEYFFLNTNIKTAKLYRESQKSLRYISKLEELIKGSNNKCIVLSNKQKSQLYTKLNAKTKIIILNSENWNVKNINSNTFQDQYLQMINQVKKCIH</sequence>
<reference key="1">
    <citation type="journal article" date="1998" name="Nature">
        <title>The genome sequence of Rickettsia prowazekii and the origin of mitochondria.</title>
        <authorList>
            <person name="Andersson S.G.E."/>
            <person name="Zomorodipour A."/>
            <person name="Andersson J.O."/>
            <person name="Sicheritz-Ponten T."/>
            <person name="Alsmark U.C.M."/>
            <person name="Podowski R.M."/>
            <person name="Naeslund A.K."/>
            <person name="Eriksson A.-S."/>
            <person name="Winkler H.H."/>
            <person name="Kurland C.G."/>
        </authorList>
    </citation>
    <scope>NUCLEOTIDE SEQUENCE [LARGE SCALE GENOMIC DNA]</scope>
    <source>
        <strain>Madrid E</strain>
    </source>
</reference>
<name>Y014_RICPR</name>
<comment type="subcellular location">
    <subcellularLocation>
        <location evidence="2">Membrane</location>
        <topology evidence="2">Single-pass membrane protein</topology>
    </subcellularLocation>
</comment>
<evidence type="ECO:0000255" key="1"/>
<evidence type="ECO:0000305" key="2"/>
<protein>
    <recommendedName>
        <fullName>Uncharacterized protein RP014</fullName>
    </recommendedName>
</protein>
<organism>
    <name type="scientific">Rickettsia prowazekii (strain Madrid E)</name>
    <dbReference type="NCBI Taxonomy" id="272947"/>
    <lineage>
        <taxon>Bacteria</taxon>
        <taxon>Pseudomonadati</taxon>
        <taxon>Pseudomonadota</taxon>
        <taxon>Alphaproteobacteria</taxon>
        <taxon>Rickettsiales</taxon>
        <taxon>Rickettsiaceae</taxon>
        <taxon>Rickettsieae</taxon>
        <taxon>Rickettsia</taxon>
        <taxon>typhus group</taxon>
    </lineage>
</organism>
<accession>Q9ZEC9</accession>
<dbReference type="EMBL" id="AJ235270">
    <property type="protein sequence ID" value="CAA14486.1"/>
    <property type="molecule type" value="Genomic_DNA"/>
</dbReference>
<dbReference type="PIR" id="G71708">
    <property type="entry name" value="G71708"/>
</dbReference>
<dbReference type="RefSeq" id="NP_220409.1">
    <property type="nucleotide sequence ID" value="NC_000963.1"/>
</dbReference>
<dbReference type="RefSeq" id="WP_004599700.1">
    <property type="nucleotide sequence ID" value="NC_000963.1"/>
</dbReference>
<dbReference type="SMR" id="Q9ZEC9"/>
<dbReference type="STRING" id="272947.gene:17555097"/>
<dbReference type="EnsemblBacteria" id="CAA14486">
    <property type="protein sequence ID" value="CAA14486"/>
    <property type="gene ID" value="CAA14486"/>
</dbReference>
<dbReference type="KEGG" id="rpr:RP014"/>
<dbReference type="PATRIC" id="fig|272947.5.peg.14"/>
<dbReference type="eggNOG" id="COG0803">
    <property type="taxonomic scope" value="Bacteria"/>
</dbReference>
<dbReference type="HOGENOM" id="CLU_071042_0_0_5"/>
<dbReference type="OrthoDB" id="7346865at2"/>
<dbReference type="Proteomes" id="UP000002480">
    <property type="component" value="Chromosome"/>
</dbReference>
<dbReference type="GO" id="GO:0016020">
    <property type="term" value="C:membrane"/>
    <property type="evidence" value="ECO:0007669"/>
    <property type="project" value="UniProtKB-SubCell"/>
</dbReference>
<dbReference type="GO" id="GO:0046872">
    <property type="term" value="F:metal ion binding"/>
    <property type="evidence" value="ECO:0007669"/>
    <property type="project" value="InterPro"/>
</dbReference>
<dbReference type="GO" id="GO:0030001">
    <property type="term" value="P:metal ion transport"/>
    <property type="evidence" value="ECO:0007669"/>
    <property type="project" value="InterPro"/>
</dbReference>
<dbReference type="CDD" id="cd01145">
    <property type="entry name" value="TroA_c"/>
    <property type="match status" value="1"/>
</dbReference>
<dbReference type="Gene3D" id="3.40.50.1980">
    <property type="entry name" value="Nitrogenase molybdenum iron protein domain"/>
    <property type="match status" value="1"/>
</dbReference>
<dbReference type="InterPro" id="IPR050492">
    <property type="entry name" value="Bact_metal-bind_prot9"/>
</dbReference>
<dbReference type="InterPro" id="IPR006127">
    <property type="entry name" value="ZnuA-like"/>
</dbReference>
<dbReference type="PANTHER" id="PTHR42953">
    <property type="entry name" value="HIGH-AFFINITY ZINC UPTAKE SYSTEM PROTEIN ZNUA-RELATED"/>
    <property type="match status" value="1"/>
</dbReference>
<dbReference type="Pfam" id="PF01297">
    <property type="entry name" value="ZnuA"/>
    <property type="match status" value="1"/>
</dbReference>
<dbReference type="SUPFAM" id="SSF53807">
    <property type="entry name" value="Helical backbone' metal receptor"/>
    <property type="match status" value="1"/>
</dbReference>